<proteinExistence type="inferred from homology"/>
<protein>
    <recommendedName>
        <fullName evidence="1">Sec-independent protein translocase protein TatA</fullName>
    </recommendedName>
</protein>
<organism>
    <name type="scientific">Rickettsia peacockii (strain Rustic)</name>
    <dbReference type="NCBI Taxonomy" id="562019"/>
    <lineage>
        <taxon>Bacteria</taxon>
        <taxon>Pseudomonadati</taxon>
        <taxon>Pseudomonadota</taxon>
        <taxon>Alphaproteobacteria</taxon>
        <taxon>Rickettsiales</taxon>
        <taxon>Rickettsiaceae</taxon>
        <taxon>Rickettsieae</taxon>
        <taxon>Rickettsia</taxon>
        <taxon>spotted fever group</taxon>
    </lineage>
</organism>
<comment type="function">
    <text evidence="1">Part of the twin-arginine translocation (Tat) system that transports large folded proteins containing a characteristic twin-arginine motif in their signal peptide across membranes. TatA could form the protein-conducting channel of the Tat system.</text>
</comment>
<comment type="subunit">
    <text evidence="1">The Tat system comprises two distinct complexes: a TatABC complex, containing multiple copies of TatA, TatB and TatC subunits, and a separate TatA complex, containing only TatA subunits. Substrates initially bind to the TatABC complex, which probably triggers association of the separate TatA complex to form the active translocon.</text>
</comment>
<comment type="subcellular location">
    <subcellularLocation>
        <location evidence="1">Cell inner membrane</location>
        <topology evidence="1">Single-pass membrane protein</topology>
    </subcellularLocation>
</comment>
<comment type="similarity">
    <text evidence="1">Belongs to the TatA/E family.</text>
</comment>
<sequence length="55" mass="5985">MGMSFSHLLIVLLIIFVLFGAGKLPQVMSDLAKGLKAFKDGMKDDGSDNDNDKNK</sequence>
<keyword id="KW-0997">Cell inner membrane</keyword>
<keyword id="KW-1003">Cell membrane</keyword>
<keyword id="KW-0472">Membrane</keyword>
<keyword id="KW-0653">Protein transport</keyword>
<keyword id="KW-0811">Translocation</keyword>
<keyword id="KW-0812">Transmembrane</keyword>
<keyword id="KW-1133">Transmembrane helix</keyword>
<keyword id="KW-0813">Transport</keyword>
<feature type="chain" id="PRO_1000204443" description="Sec-independent protein translocase protein TatA">
    <location>
        <begin position="1"/>
        <end position="55"/>
    </location>
</feature>
<feature type="transmembrane region" description="Helical" evidence="1">
    <location>
        <begin position="1"/>
        <end position="21"/>
    </location>
</feature>
<evidence type="ECO:0000255" key="1">
    <source>
        <dbReference type="HAMAP-Rule" id="MF_00236"/>
    </source>
</evidence>
<gene>
    <name evidence="1" type="primary">tatA</name>
    <name type="ordered locus">RPR_03195</name>
</gene>
<name>TATA_RICPU</name>
<reference key="1">
    <citation type="journal article" date="2009" name="PLoS ONE">
        <title>Genome sequence of the endosymbiont Rickettsia peacockii and comparison with virulent Rickettsia rickettsii: identification of virulence factors.</title>
        <authorList>
            <person name="Felsheim R.F."/>
            <person name="Kurtti T.J."/>
            <person name="Munderloh U.G."/>
        </authorList>
    </citation>
    <scope>NUCLEOTIDE SEQUENCE [LARGE SCALE GENOMIC DNA]</scope>
    <source>
        <strain>Rustic</strain>
    </source>
</reference>
<accession>C4K1G9</accession>
<dbReference type="EMBL" id="CP001227">
    <property type="protein sequence ID" value="ACR47420.1"/>
    <property type="molecule type" value="Genomic_DNA"/>
</dbReference>
<dbReference type="RefSeq" id="WP_012736667.1">
    <property type="nucleotide sequence ID" value="NC_012730.1"/>
</dbReference>
<dbReference type="SMR" id="C4K1G9"/>
<dbReference type="KEGG" id="rpk:RPR_03195"/>
<dbReference type="HOGENOM" id="CLU_086034_6_2_5"/>
<dbReference type="Proteomes" id="UP000005015">
    <property type="component" value="Chromosome"/>
</dbReference>
<dbReference type="GO" id="GO:0033281">
    <property type="term" value="C:TAT protein transport complex"/>
    <property type="evidence" value="ECO:0007669"/>
    <property type="project" value="UniProtKB-UniRule"/>
</dbReference>
<dbReference type="GO" id="GO:0008320">
    <property type="term" value="F:protein transmembrane transporter activity"/>
    <property type="evidence" value="ECO:0007669"/>
    <property type="project" value="UniProtKB-UniRule"/>
</dbReference>
<dbReference type="GO" id="GO:0043953">
    <property type="term" value="P:protein transport by the Tat complex"/>
    <property type="evidence" value="ECO:0007669"/>
    <property type="project" value="UniProtKB-UniRule"/>
</dbReference>
<dbReference type="Gene3D" id="1.20.5.3310">
    <property type="match status" value="1"/>
</dbReference>
<dbReference type="HAMAP" id="MF_00236">
    <property type="entry name" value="TatA_E"/>
    <property type="match status" value="1"/>
</dbReference>
<dbReference type="InterPro" id="IPR003369">
    <property type="entry name" value="TatA/B/E"/>
</dbReference>
<dbReference type="InterPro" id="IPR006312">
    <property type="entry name" value="TatA/E"/>
</dbReference>
<dbReference type="NCBIfam" id="NF002402">
    <property type="entry name" value="PRK01470.1"/>
    <property type="match status" value="1"/>
</dbReference>
<dbReference type="NCBIfam" id="TIGR01411">
    <property type="entry name" value="tatAE"/>
    <property type="match status" value="1"/>
</dbReference>
<dbReference type="PANTHER" id="PTHR42982">
    <property type="entry name" value="SEC-INDEPENDENT PROTEIN TRANSLOCASE PROTEIN TATA"/>
    <property type="match status" value="1"/>
</dbReference>
<dbReference type="PANTHER" id="PTHR42982:SF1">
    <property type="entry name" value="SEC-INDEPENDENT PROTEIN TRANSLOCASE PROTEIN TATA"/>
    <property type="match status" value="1"/>
</dbReference>
<dbReference type="Pfam" id="PF02416">
    <property type="entry name" value="TatA_B_E"/>
    <property type="match status" value="1"/>
</dbReference>